<accession>Q4WWC6</accession>
<keyword id="KW-0007">Acetylation</keyword>
<keyword id="KW-0158">Chromosome</keyword>
<keyword id="KW-0227">DNA damage</keyword>
<keyword id="KW-0234">DNA repair</keyword>
<keyword id="KW-0238">DNA-binding</keyword>
<keyword id="KW-0488">Methylation</keyword>
<keyword id="KW-0544">Nucleosome core</keyword>
<keyword id="KW-0539">Nucleus</keyword>
<keyword id="KW-0597">Phosphoprotein</keyword>
<keyword id="KW-1185">Reference proteome</keyword>
<comment type="function">
    <text>Core component of nucleosome which plays a central role in DNA double strand break (DSB) repair. Nucleosomes wrap and compact DNA into chromatin, limiting DNA accessibility to the cellular machineries which require DNA as a template. Histones thereby play a central role in transcription regulation, DNA repair, DNA replication and chromosomal stability. DNA accessibility is regulated via a complex set of post-translational modifications of histones, also called histone code, and nucleosome remodeling.</text>
</comment>
<comment type="subunit">
    <text>The nucleosome is a histone octamer containing two molecules each of H2A, H2B, H3 and H4 assembled in one H3-H4 heterotetramer and two H2A-H2B heterodimers. The octamer wraps approximately 147 bp of DNA.</text>
</comment>
<comment type="subcellular location">
    <subcellularLocation>
        <location evidence="1">Nucleus</location>
    </subcellularLocation>
    <subcellularLocation>
        <location evidence="1">Chromosome</location>
    </subcellularLocation>
</comment>
<comment type="domain">
    <text>The [ST]-Q motif constitutes a recognition sequence for kinases from the PI3/PI4-kinase family.</text>
</comment>
<comment type="PTM">
    <text evidence="1">Phosphorylated to form H2AS128ph (gamma-H2A) in response to DNA double-strand breaks (DSBs) generated by exogenous genotoxic agents and by stalled replication forks. Phosphorylation is dependent on the DNA damage checkpoint kinases mec1/ATR and tel1/ATM, spreads on either side of a detected DSB site and may mark the surrounding chromatin for recruitment of proteins required for DNA damage signaling and repair. Gamma-H2A is removed from the DNA prior to the strand invasion-primer extension step of the repair process and subsequently dephosphorylated. Dephosphorylation is necessary for efficient recovery from the DNA damage checkpoint (By similarity).</text>
</comment>
<comment type="PTM">
    <text evidence="1">Acetylated by esa1 to form H2AK4ac and H2AK7ac.</text>
</comment>
<comment type="miscellaneous">
    <text evidence="3">In contrast to vertebrates and insects, its C-terminus is not monoubiquitinated.</text>
</comment>
<comment type="similarity">
    <text evidence="3">Belongs to the histone H2A family.</text>
</comment>
<comment type="caution">
    <text evidence="3">To ensure consistency between histone entries, we follow the 'Brno' nomenclature for histone modifications, with positions referring to those used in the literature for the 'closest' model organism. Due to slight variations in histone sequences between organisms and to the presence of initiator methionine in UniProtKB/Swiss-Prot sequences, the actual positions of modified amino acids in the sequence generally differ. In this entry the following conventions are used: H2AK4ac = acetylated Lys-5; H2AK7ac = acetylated Lys-9; H2AS128ph = phosphorylated Ser-130.</text>
</comment>
<comment type="sequence caution" evidence="3">
    <conflict type="erroneous gene model prediction">
        <sequence resource="EMBL-CDS" id="EAL93027"/>
    </conflict>
</comment>
<organism>
    <name type="scientific">Aspergillus fumigatus (strain ATCC MYA-4609 / CBS 101355 / FGSC A1100 / Af293)</name>
    <name type="common">Neosartorya fumigata</name>
    <dbReference type="NCBI Taxonomy" id="330879"/>
    <lineage>
        <taxon>Eukaryota</taxon>
        <taxon>Fungi</taxon>
        <taxon>Dikarya</taxon>
        <taxon>Ascomycota</taxon>
        <taxon>Pezizomycotina</taxon>
        <taxon>Eurotiomycetes</taxon>
        <taxon>Eurotiomycetidae</taxon>
        <taxon>Eurotiales</taxon>
        <taxon>Aspergillaceae</taxon>
        <taxon>Aspergillus</taxon>
        <taxon>Aspergillus subgen. Fumigati</taxon>
    </lineage>
</organism>
<gene>
    <name type="primary">hta1</name>
    <name type="ORF">AFUA_3G05360</name>
</gene>
<reference key="1">
    <citation type="journal article" date="2005" name="Nature">
        <title>Genomic sequence of the pathogenic and allergenic filamentous fungus Aspergillus fumigatus.</title>
        <authorList>
            <person name="Nierman W.C."/>
            <person name="Pain A."/>
            <person name="Anderson M.J."/>
            <person name="Wortman J.R."/>
            <person name="Kim H.S."/>
            <person name="Arroyo J."/>
            <person name="Berriman M."/>
            <person name="Abe K."/>
            <person name="Archer D.B."/>
            <person name="Bermejo C."/>
            <person name="Bennett J.W."/>
            <person name="Bowyer P."/>
            <person name="Chen D."/>
            <person name="Collins M."/>
            <person name="Coulsen R."/>
            <person name="Davies R."/>
            <person name="Dyer P.S."/>
            <person name="Farman M.L."/>
            <person name="Fedorova N."/>
            <person name="Fedorova N.D."/>
            <person name="Feldblyum T.V."/>
            <person name="Fischer R."/>
            <person name="Fosker N."/>
            <person name="Fraser A."/>
            <person name="Garcia J.L."/>
            <person name="Garcia M.J."/>
            <person name="Goble A."/>
            <person name="Goldman G.H."/>
            <person name="Gomi K."/>
            <person name="Griffith-Jones S."/>
            <person name="Gwilliam R."/>
            <person name="Haas B.J."/>
            <person name="Haas H."/>
            <person name="Harris D.E."/>
            <person name="Horiuchi H."/>
            <person name="Huang J."/>
            <person name="Humphray S."/>
            <person name="Jimenez J."/>
            <person name="Keller N."/>
            <person name="Khouri H."/>
            <person name="Kitamoto K."/>
            <person name="Kobayashi T."/>
            <person name="Konzack S."/>
            <person name="Kulkarni R."/>
            <person name="Kumagai T."/>
            <person name="Lafton A."/>
            <person name="Latge J.-P."/>
            <person name="Li W."/>
            <person name="Lord A."/>
            <person name="Lu C."/>
            <person name="Majoros W.H."/>
            <person name="May G.S."/>
            <person name="Miller B.L."/>
            <person name="Mohamoud Y."/>
            <person name="Molina M."/>
            <person name="Monod M."/>
            <person name="Mouyna I."/>
            <person name="Mulligan S."/>
            <person name="Murphy L.D."/>
            <person name="O'Neil S."/>
            <person name="Paulsen I."/>
            <person name="Penalva M.A."/>
            <person name="Pertea M."/>
            <person name="Price C."/>
            <person name="Pritchard B.L."/>
            <person name="Quail M.A."/>
            <person name="Rabbinowitsch E."/>
            <person name="Rawlins N."/>
            <person name="Rajandream M.A."/>
            <person name="Reichard U."/>
            <person name="Renauld H."/>
            <person name="Robson G.D."/>
            <person name="Rodriguez de Cordoba S."/>
            <person name="Rodriguez-Pena J.M."/>
            <person name="Ronning C.M."/>
            <person name="Rutter S."/>
            <person name="Salzberg S.L."/>
            <person name="Sanchez M."/>
            <person name="Sanchez-Ferrero J.C."/>
            <person name="Saunders D."/>
            <person name="Seeger K."/>
            <person name="Squares R."/>
            <person name="Squares S."/>
            <person name="Takeuchi M."/>
            <person name="Tekaia F."/>
            <person name="Turner G."/>
            <person name="Vazquez de Aldana C.R."/>
            <person name="Weidman J."/>
            <person name="White O."/>
            <person name="Woodward J.R."/>
            <person name="Yu J.-H."/>
            <person name="Fraser C.M."/>
            <person name="Galagan J.E."/>
            <person name="Asai K."/>
            <person name="Machida M."/>
            <person name="Hall N."/>
            <person name="Barrell B.G."/>
            <person name="Denning D.W."/>
        </authorList>
    </citation>
    <scope>NUCLEOTIDE SEQUENCE [LARGE SCALE GENOMIC DNA]</scope>
    <source>
        <strain>ATCC MYA-4609 / CBS 101355 / FGSC A1100 / Af293</strain>
    </source>
</reference>
<protein>
    <recommendedName>
        <fullName>Histone H2A</fullName>
    </recommendedName>
</protein>
<proteinExistence type="inferred from homology"/>
<name>H2A_ASPFU</name>
<feature type="initiator methionine" description="Removed" evidence="1">
    <location>
        <position position="1"/>
    </location>
</feature>
<feature type="chain" id="PRO_0000228723" description="Histone H2A">
    <location>
        <begin position="2"/>
        <end position="133"/>
    </location>
</feature>
<feature type="region of interest" description="Disordered" evidence="2">
    <location>
        <begin position="1"/>
        <end position="24"/>
    </location>
</feature>
<feature type="short sequence motif" description="[ST]-Q motif">
    <location>
        <begin position="130"/>
        <end position="131"/>
    </location>
</feature>
<feature type="compositionally biased region" description="Gly residues" evidence="2">
    <location>
        <begin position="1"/>
        <end position="10"/>
    </location>
</feature>
<feature type="site" description="Not ubiquitinated" evidence="3">
    <location>
        <position position="120"/>
    </location>
</feature>
<feature type="modified residue" description="N6-acetyllysine" evidence="1">
    <location>
        <position position="5"/>
    </location>
</feature>
<feature type="modified residue" description="N6-acetyllysine" evidence="1">
    <location>
        <position position="9"/>
    </location>
</feature>
<feature type="modified residue" description="N5-methylglutamine" evidence="1">
    <location>
        <position position="106"/>
    </location>
</feature>
<feature type="modified residue" description="Phosphoserine" evidence="1">
    <location>
        <position position="130"/>
    </location>
</feature>
<evidence type="ECO:0000250" key="1"/>
<evidence type="ECO:0000256" key="2">
    <source>
        <dbReference type="SAM" id="MobiDB-lite"/>
    </source>
</evidence>
<evidence type="ECO:0000305" key="3"/>
<dbReference type="EMBL" id="AAHF01000002">
    <property type="protein sequence ID" value="EAL93027.1"/>
    <property type="status" value="ALT_SEQ"/>
    <property type="molecule type" value="Genomic_DNA"/>
</dbReference>
<dbReference type="RefSeq" id="XP_755065.1">
    <property type="nucleotide sequence ID" value="XM_749972.1"/>
</dbReference>
<dbReference type="SMR" id="Q4WWC6"/>
<dbReference type="FunCoup" id="Q4WWC6">
    <property type="interactions" value="985"/>
</dbReference>
<dbReference type="STRING" id="330879.Q4WWC6"/>
<dbReference type="GeneID" id="3512666"/>
<dbReference type="KEGG" id="afm:AFUA_3G05360"/>
<dbReference type="eggNOG" id="KOG1756">
    <property type="taxonomic scope" value="Eukaryota"/>
</dbReference>
<dbReference type="InParanoid" id="Q4WWC6"/>
<dbReference type="OrthoDB" id="9421954at2759"/>
<dbReference type="Proteomes" id="UP000002530">
    <property type="component" value="Chromosome 3"/>
</dbReference>
<dbReference type="GO" id="GO:0000786">
    <property type="term" value="C:nucleosome"/>
    <property type="evidence" value="ECO:0000318"/>
    <property type="project" value="GO_Central"/>
</dbReference>
<dbReference type="GO" id="GO:0005634">
    <property type="term" value="C:nucleus"/>
    <property type="evidence" value="ECO:0000318"/>
    <property type="project" value="GO_Central"/>
</dbReference>
<dbReference type="GO" id="GO:0003677">
    <property type="term" value="F:DNA binding"/>
    <property type="evidence" value="ECO:0007669"/>
    <property type="project" value="UniProtKB-KW"/>
</dbReference>
<dbReference type="GO" id="GO:0046982">
    <property type="term" value="F:protein heterodimerization activity"/>
    <property type="evidence" value="ECO:0007669"/>
    <property type="project" value="InterPro"/>
</dbReference>
<dbReference type="GO" id="GO:0030527">
    <property type="term" value="F:structural constituent of chromatin"/>
    <property type="evidence" value="ECO:0000318"/>
    <property type="project" value="GO_Central"/>
</dbReference>
<dbReference type="GO" id="GO:0006281">
    <property type="term" value="P:DNA repair"/>
    <property type="evidence" value="ECO:0007669"/>
    <property type="project" value="UniProtKB-KW"/>
</dbReference>
<dbReference type="GO" id="GO:0031507">
    <property type="term" value="P:heterochromatin formation"/>
    <property type="evidence" value="ECO:0000318"/>
    <property type="project" value="GO_Central"/>
</dbReference>
<dbReference type="CDD" id="cd00074">
    <property type="entry name" value="HFD_H2A"/>
    <property type="match status" value="1"/>
</dbReference>
<dbReference type="FunFam" id="1.10.20.10:FF:000008">
    <property type="entry name" value="Histone H2A"/>
    <property type="match status" value="1"/>
</dbReference>
<dbReference type="Gene3D" id="1.10.20.10">
    <property type="entry name" value="Histone, subunit A"/>
    <property type="match status" value="1"/>
</dbReference>
<dbReference type="InterPro" id="IPR009072">
    <property type="entry name" value="Histone-fold"/>
</dbReference>
<dbReference type="InterPro" id="IPR002119">
    <property type="entry name" value="Histone_H2A"/>
</dbReference>
<dbReference type="InterPro" id="IPR007125">
    <property type="entry name" value="Histone_H2A/H2B/H3"/>
</dbReference>
<dbReference type="InterPro" id="IPR032454">
    <property type="entry name" value="Histone_H2A_C"/>
</dbReference>
<dbReference type="InterPro" id="IPR032458">
    <property type="entry name" value="Histone_H2A_CS"/>
</dbReference>
<dbReference type="PANTHER" id="PTHR23430">
    <property type="entry name" value="HISTONE H2A"/>
    <property type="match status" value="1"/>
</dbReference>
<dbReference type="Pfam" id="PF00125">
    <property type="entry name" value="Histone"/>
    <property type="match status" value="1"/>
</dbReference>
<dbReference type="Pfam" id="PF16211">
    <property type="entry name" value="Histone_H2A_C"/>
    <property type="match status" value="1"/>
</dbReference>
<dbReference type="PRINTS" id="PR00620">
    <property type="entry name" value="HISTONEH2A"/>
</dbReference>
<dbReference type="SMART" id="SM00414">
    <property type="entry name" value="H2A"/>
    <property type="match status" value="1"/>
</dbReference>
<dbReference type="SUPFAM" id="SSF47113">
    <property type="entry name" value="Histone-fold"/>
    <property type="match status" value="1"/>
</dbReference>
<dbReference type="PROSITE" id="PS00046">
    <property type="entry name" value="HISTONE_H2A"/>
    <property type="match status" value="1"/>
</dbReference>
<sequence length="133" mass="14092">MTGGKSGGKASGSKNAQSRSSKAGLAFPVGRVHRLLRKGNYAQRVGAGAPVYLAAVLEYLAAEILELAGNAARDNKKTRIIPRHLQLAIRNDEELNKLLGHVTIAQGGVLPNIHQNLLPKKTPKSGKGPSQEL</sequence>